<gene>
    <name evidence="1" type="primary">rplT</name>
    <name type="ordered locus">Swoo_2488</name>
</gene>
<feature type="chain" id="PRO_1000122372" description="Large ribosomal subunit protein bL20">
    <location>
        <begin position="1"/>
        <end position="119"/>
    </location>
</feature>
<sequence>MPRVKRGVTARARHKKVLKLAKGYYGARSRTYRVAVQAVTKAGQYAYRDRRQKKRQFRQLWIARINAASRQNGLSYSRFINGLKKASIEIDRKILADIAVFDKVVFTTLVEKAKEALAK</sequence>
<protein>
    <recommendedName>
        <fullName evidence="1">Large ribosomal subunit protein bL20</fullName>
    </recommendedName>
    <alternativeName>
        <fullName evidence="2">50S ribosomal protein L20</fullName>
    </alternativeName>
</protein>
<organism>
    <name type="scientific">Shewanella woodyi (strain ATCC 51908 / MS32)</name>
    <dbReference type="NCBI Taxonomy" id="392500"/>
    <lineage>
        <taxon>Bacteria</taxon>
        <taxon>Pseudomonadati</taxon>
        <taxon>Pseudomonadota</taxon>
        <taxon>Gammaproteobacteria</taxon>
        <taxon>Alteromonadales</taxon>
        <taxon>Shewanellaceae</taxon>
        <taxon>Shewanella</taxon>
    </lineage>
</organism>
<proteinExistence type="inferred from homology"/>
<evidence type="ECO:0000255" key="1">
    <source>
        <dbReference type="HAMAP-Rule" id="MF_00382"/>
    </source>
</evidence>
<evidence type="ECO:0000305" key="2"/>
<accession>B1KG58</accession>
<comment type="function">
    <text evidence="1">Binds directly to 23S ribosomal RNA and is necessary for the in vitro assembly process of the 50S ribosomal subunit. It is not involved in the protein synthesizing functions of that subunit.</text>
</comment>
<comment type="similarity">
    <text evidence="1">Belongs to the bacterial ribosomal protein bL20 family.</text>
</comment>
<reference key="1">
    <citation type="submission" date="2008-02" db="EMBL/GenBank/DDBJ databases">
        <title>Complete sequence of Shewanella woodyi ATCC 51908.</title>
        <authorList>
            <consortium name="US DOE Joint Genome Institute"/>
            <person name="Copeland A."/>
            <person name="Lucas S."/>
            <person name="Lapidus A."/>
            <person name="Glavina del Rio T."/>
            <person name="Dalin E."/>
            <person name="Tice H."/>
            <person name="Bruce D."/>
            <person name="Goodwin L."/>
            <person name="Pitluck S."/>
            <person name="Sims D."/>
            <person name="Brettin T."/>
            <person name="Detter J.C."/>
            <person name="Han C."/>
            <person name="Kuske C.R."/>
            <person name="Schmutz J."/>
            <person name="Larimer F."/>
            <person name="Land M."/>
            <person name="Hauser L."/>
            <person name="Kyrpides N."/>
            <person name="Lykidis A."/>
            <person name="Zhao J.-S."/>
            <person name="Richardson P."/>
        </authorList>
    </citation>
    <scope>NUCLEOTIDE SEQUENCE [LARGE SCALE GENOMIC DNA]</scope>
    <source>
        <strain>ATCC 51908 / MS32</strain>
    </source>
</reference>
<dbReference type="EMBL" id="CP000961">
    <property type="protein sequence ID" value="ACA86765.1"/>
    <property type="molecule type" value="Genomic_DNA"/>
</dbReference>
<dbReference type="RefSeq" id="WP_012325107.1">
    <property type="nucleotide sequence ID" value="NC_010506.1"/>
</dbReference>
<dbReference type="SMR" id="B1KG58"/>
<dbReference type="STRING" id="392500.Swoo_2488"/>
<dbReference type="KEGG" id="swd:Swoo_2488"/>
<dbReference type="eggNOG" id="COG0292">
    <property type="taxonomic scope" value="Bacteria"/>
</dbReference>
<dbReference type="HOGENOM" id="CLU_123265_0_1_6"/>
<dbReference type="Proteomes" id="UP000002168">
    <property type="component" value="Chromosome"/>
</dbReference>
<dbReference type="GO" id="GO:1990904">
    <property type="term" value="C:ribonucleoprotein complex"/>
    <property type="evidence" value="ECO:0007669"/>
    <property type="project" value="UniProtKB-KW"/>
</dbReference>
<dbReference type="GO" id="GO:0005840">
    <property type="term" value="C:ribosome"/>
    <property type="evidence" value="ECO:0007669"/>
    <property type="project" value="UniProtKB-KW"/>
</dbReference>
<dbReference type="GO" id="GO:0019843">
    <property type="term" value="F:rRNA binding"/>
    <property type="evidence" value="ECO:0007669"/>
    <property type="project" value="UniProtKB-UniRule"/>
</dbReference>
<dbReference type="GO" id="GO:0003735">
    <property type="term" value="F:structural constituent of ribosome"/>
    <property type="evidence" value="ECO:0007669"/>
    <property type="project" value="InterPro"/>
</dbReference>
<dbReference type="GO" id="GO:0000027">
    <property type="term" value="P:ribosomal large subunit assembly"/>
    <property type="evidence" value="ECO:0007669"/>
    <property type="project" value="UniProtKB-UniRule"/>
</dbReference>
<dbReference type="GO" id="GO:0006412">
    <property type="term" value="P:translation"/>
    <property type="evidence" value="ECO:0007669"/>
    <property type="project" value="InterPro"/>
</dbReference>
<dbReference type="CDD" id="cd07026">
    <property type="entry name" value="Ribosomal_L20"/>
    <property type="match status" value="1"/>
</dbReference>
<dbReference type="FunFam" id="1.10.1900.20:FF:000001">
    <property type="entry name" value="50S ribosomal protein L20"/>
    <property type="match status" value="1"/>
</dbReference>
<dbReference type="Gene3D" id="6.10.160.10">
    <property type="match status" value="1"/>
</dbReference>
<dbReference type="Gene3D" id="1.10.1900.20">
    <property type="entry name" value="Ribosomal protein L20"/>
    <property type="match status" value="1"/>
</dbReference>
<dbReference type="HAMAP" id="MF_00382">
    <property type="entry name" value="Ribosomal_bL20"/>
    <property type="match status" value="1"/>
</dbReference>
<dbReference type="InterPro" id="IPR005813">
    <property type="entry name" value="Ribosomal_bL20"/>
</dbReference>
<dbReference type="InterPro" id="IPR049946">
    <property type="entry name" value="RIBOSOMAL_L20_CS"/>
</dbReference>
<dbReference type="InterPro" id="IPR035566">
    <property type="entry name" value="Ribosomal_protein_bL20_C"/>
</dbReference>
<dbReference type="NCBIfam" id="TIGR01032">
    <property type="entry name" value="rplT_bact"/>
    <property type="match status" value="1"/>
</dbReference>
<dbReference type="PANTHER" id="PTHR10986">
    <property type="entry name" value="39S RIBOSOMAL PROTEIN L20"/>
    <property type="match status" value="1"/>
</dbReference>
<dbReference type="Pfam" id="PF00453">
    <property type="entry name" value="Ribosomal_L20"/>
    <property type="match status" value="1"/>
</dbReference>
<dbReference type="PRINTS" id="PR00062">
    <property type="entry name" value="RIBOSOMALL20"/>
</dbReference>
<dbReference type="SUPFAM" id="SSF74731">
    <property type="entry name" value="Ribosomal protein L20"/>
    <property type="match status" value="1"/>
</dbReference>
<dbReference type="PROSITE" id="PS00937">
    <property type="entry name" value="RIBOSOMAL_L20"/>
    <property type="match status" value="1"/>
</dbReference>
<keyword id="KW-1185">Reference proteome</keyword>
<keyword id="KW-0687">Ribonucleoprotein</keyword>
<keyword id="KW-0689">Ribosomal protein</keyword>
<keyword id="KW-0694">RNA-binding</keyword>
<keyword id="KW-0699">rRNA-binding</keyword>
<name>RL20_SHEWM</name>